<evidence type="ECO:0000255" key="1">
    <source>
        <dbReference type="HAMAP-Rule" id="MF_03182"/>
    </source>
</evidence>
<evidence type="ECO:0000256" key="2">
    <source>
        <dbReference type="SAM" id="MobiDB-lite"/>
    </source>
</evidence>
<protein>
    <recommendedName>
        <fullName evidence="1">PAN2-PAN3 deadenylation complex catalytic subunit PAN2</fullName>
        <ecNumber evidence="1">3.1.13.4</ecNumber>
    </recommendedName>
    <alternativeName>
        <fullName evidence="1">PAB1P-dependent poly(A)-specific ribonuclease</fullName>
    </alternativeName>
    <alternativeName>
        <fullName evidence="1">Poly(A)-nuclease deadenylation complex subunit 2</fullName>
        <shortName evidence="1">PAN deadenylation complex subunit 2</shortName>
    </alternativeName>
</protein>
<proteinExistence type="inferred from homology"/>
<keyword id="KW-0963">Cytoplasm</keyword>
<keyword id="KW-0269">Exonuclease</keyword>
<keyword id="KW-0378">Hydrolase</keyword>
<keyword id="KW-0479">Metal-binding</keyword>
<keyword id="KW-0507">mRNA processing</keyword>
<keyword id="KW-0540">Nuclease</keyword>
<keyword id="KW-1185">Reference proteome</keyword>
<keyword id="KW-0677">Repeat</keyword>
<keyword id="KW-0853">WD repeat</keyword>
<name>PAN2_PICST</name>
<comment type="function">
    <text evidence="1">Catalytic subunit of the poly(A)-nuclease (PAN) deadenylation complex, one of two cytoplasmic mRNA deadenylases involved in mRNA turnover. PAN specifically shortens poly(A) tails of RNA and the activity is stimulated by poly(A)-binding protein PAB1. PAN deadenylation is followed by rapid degradation of the shortened mRNA tails by the CCR4-NOT complex. Deadenylated mRNAs are then degraded by two alternative mechanisms, namely exosome-mediated 3'-5' exonucleolytic degradation, or deadenylation-dependent mRNA decaping and subsequent 5'-3' exonucleolytic degradation by XRN1. May also be involved in post-transcriptional maturation of mRNA poly(A) tails.</text>
</comment>
<comment type="catalytic activity">
    <reaction evidence="1">
        <text>Exonucleolytic cleavage of poly(A) to 5'-AMP.</text>
        <dbReference type="EC" id="3.1.13.4"/>
    </reaction>
</comment>
<comment type="cofactor">
    <cofactor evidence="1">
        <name>a divalent metal cation</name>
        <dbReference type="ChEBI" id="CHEBI:60240"/>
    </cofactor>
    <text evidence="1">Binds 2 metal cations per subunit in the catalytic exonuclease domain.</text>
</comment>
<comment type="activity regulation">
    <text evidence="1">Positively regulated by the regulatory subunit PAN3.</text>
</comment>
<comment type="subunit">
    <text evidence="1">Forms a heterotrimer with an asymmetric homodimer of the regulatory subunit PAN3 to form the poly(A)-nuclease (PAN) deadenylation complex.</text>
</comment>
<comment type="subcellular location">
    <subcellularLocation>
        <location evidence="1">Cytoplasm</location>
    </subcellularLocation>
</comment>
<comment type="domain">
    <text evidence="1">Contains a pseudo-UCH domain. This ubiquitin C-terminal hydrolase (UCH)-like or ubiquitin specific protease (USP)-like domain is predicted to be catalytically inactive because it lacks the active site catalytic triad characteristic of thiol proteases, with residues at the equivalent structural positions that are incompatible with catalysis, and it cannot bind ubiquitin. It functions as a structural scaffold for intra- and intermolecular interactions in the complex.</text>
</comment>
<comment type="domain">
    <text evidence="1">The linker, or PAN3 interaction domain (PID), between the WD40 repeats and the pseudo-UCH domain mediates interaction with PAN3.</text>
</comment>
<comment type="similarity">
    <text evidence="1">Belongs to the peptidase C19 family. PAN2 subfamily.</text>
</comment>
<sequence>MDGWTEISRIAATTQPPKGPSPHIHEPASITSLKFDSVQNLIWCGDSFGYTRSFTPGPNSNGVNPYQQSLSFLPYTKFKSSLNNNPILQHLDHKDGILSLSSNCINFNNRRGLAKLSLSSDSFVDANSVLFKNLTSLTTNCNTMNDIVVGSNLSLLKFDLNKPSHLMSFNHDGNISIVNQTSKFLTLGKANGALELFDPVSNSSIKSFQGHTGLLSDLDVQGSYIATCGYSIRPRRYNHNSQNSNNDYMVDPLVNIYDVRMMRAVAPIPFPAGASCVRFHPKLPNIVLISSNSGQLQFVDIYDQTNVFLYQADLMPTSQPRQPSQLSKAPFMTNLEISENGDFFAFSDSYATMHLWTLNNSGSTITKDFVNFPASIEQPDVIIPPATEHIGVDDLVPLSTIGMPYYKDLLLSNYASDLSFTKELAKLPDPIDHDLLVESESHVGFFPYDKSKYGPANTAKKYQSLKERSNIHSTVNVPKFISERNNALTKTMSNTSLALQNLNKEHHNEIFQYKVPLSRKKIPNCYSRLQIQYSKFGVKDFDFSYYNRTDGLYCGLENDADNSYVNPLLQLYKFQPAFHNLMVRNLTNEWLPNDFETIITQKNPQGSSILNELGYLFDMMNKAKDKNVNMSNFSQVFKENRLAQTENLINLDEGAKLNSQALRNLIIGFNKFLIAEVYKDLMNQARDSSISSLMTVSYVMEVRGTGPSCPIYDKQFGSQLSLDLLTPPSNVLNKLSILLNPQINTQQQVVTPTTTRRNHNLITYLEYTINQFKTIPCQQHQHQYPHTLEVRSSITKLPPLLSLNVNLSNEEFKLINGFKKWLVPEFYALNNNNDAPIAFKPVLTQFDQDSTRYELLGYVCEISQQSDFSLGTHNLVSYVKIDGRWFLFNDFLVMQIPEEEVFNLSYPWKKPVILVYHDSSISGIPFDLFQIETFANLPGLNDSIIYRDHFAGSIRESHKKDYELLTRQEAPSLGTLIAIDAEFVNLRPEELEVRYDGHKKLIKPKFLSLARLSALRGDNGEKQGVAFIDDYVVHTGEIYDYLTSFSGIEPGDLDPINSEKNLVTLQTVYRKLWLLLNLGVVFVGHGLYNDFRGINLQVPQNQIRDTADFYYKSDFKRQLSLKFLAYVLLKEKVQTGNHDSIEDAYTALLLYKKYIEITATGEYESTLNYIYSEGQQLRFKVPE</sequence>
<accession>A3LRV8</accession>
<feature type="chain" id="PRO_0000295354" description="PAN2-PAN3 deadenylation complex catalytic subunit PAN2">
    <location>
        <begin position="1"/>
        <end position="1183"/>
    </location>
</feature>
<feature type="repeat" description="WD 1" evidence="1">
    <location>
        <begin position="159"/>
        <end position="207"/>
    </location>
</feature>
<feature type="repeat" description="WD 2" evidence="1">
    <location>
        <begin position="269"/>
        <end position="309"/>
    </location>
</feature>
<feature type="repeat" description="WD 3" evidence="1">
    <location>
        <begin position="327"/>
        <end position="366"/>
    </location>
</feature>
<feature type="domain" description="USP" evidence="1">
    <location>
        <begin position="521"/>
        <end position="919"/>
    </location>
</feature>
<feature type="domain" description="Exonuclease" evidence="1">
    <location>
        <begin position="977"/>
        <end position="1151"/>
    </location>
</feature>
<feature type="region of interest" description="Disordered" evidence="2">
    <location>
        <begin position="1"/>
        <end position="24"/>
    </location>
</feature>
<feature type="region of interest" description="Linker" evidence="1">
    <location>
        <begin position="369"/>
        <end position="520"/>
    </location>
</feature>
<feature type="binding site" evidence="1">
    <location>
        <position position="980"/>
    </location>
    <ligand>
        <name>a divalent metal cation</name>
        <dbReference type="ChEBI" id="CHEBI:60240"/>
        <note>catalytic</note>
    </ligand>
</feature>
<feature type="binding site" evidence="1">
    <location>
        <position position="982"/>
    </location>
    <ligand>
        <name>a divalent metal cation</name>
        <dbReference type="ChEBI" id="CHEBI:60240"/>
        <note>catalytic</note>
    </ligand>
</feature>
<feature type="binding site" evidence="1">
    <location>
        <position position="1090"/>
    </location>
    <ligand>
        <name>a divalent metal cation</name>
        <dbReference type="ChEBI" id="CHEBI:60240"/>
        <note>catalytic</note>
    </ligand>
</feature>
<feature type="binding site" evidence="1">
    <location>
        <position position="1143"/>
    </location>
    <ligand>
        <name>a divalent metal cation</name>
        <dbReference type="ChEBI" id="CHEBI:60240"/>
        <note>catalytic</note>
    </ligand>
</feature>
<dbReference type="EC" id="3.1.13.4" evidence="1"/>
<dbReference type="EMBL" id="CP000497">
    <property type="protein sequence ID" value="ABN65797.2"/>
    <property type="molecule type" value="Genomic_DNA"/>
</dbReference>
<dbReference type="RefSeq" id="XP_001383826.2">
    <property type="nucleotide sequence ID" value="XM_001383789.1"/>
</dbReference>
<dbReference type="SMR" id="A3LRV8"/>
<dbReference type="FunCoup" id="A3LRV8">
    <property type="interactions" value="691"/>
</dbReference>
<dbReference type="STRING" id="322104.A3LRV8"/>
<dbReference type="MEROPS" id="C19.978"/>
<dbReference type="GeneID" id="4838097"/>
<dbReference type="KEGG" id="pic:PICST_88597"/>
<dbReference type="eggNOG" id="KOG1275">
    <property type="taxonomic scope" value="Eukaryota"/>
</dbReference>
<dbReference type="HOGENOM" id="CLU_002369_1_0_1"/>
<dbReference type="InParanoid" id="A3LRV8"/>
<dbReference type="OMA" id="TQELLWT"/>
<dbReference type="OrthoDB" id="16516at2759"/>
<dbReference type="Proteomes" id="UP000002258">
    <property type="component" value="Chromosome 3"/>
</dbReference>
<dbReference type="GO" id="GO:0000932">
    <property type="term" value="C:P-body"/>
    <property type="evidence" value="ECO:0007669"/>
    <property type="project" value="TreeGrafter"/>
</dbReference>
<dbReference type="GO" id="GO:0031251">
    <property type="term" value="C:PAN complex"/>
    <property type="evidence" value="ECO:0007669"/>
    <property type="project" value="UniProtKB-UniRule"/>
</dbReference>
<dbReference type="GO" id="GO:0046872">
    <property type="term" value="F:metal ion binding"/>
    <property type="evidence" value="ECO:0007669"/>
    <property type="project" value="UniProtKB-KW"/>
</dbReference>
<dbReference type="GO" id="GO:0003676">
    <property type="term" value="F:nucleic acid binding"/>
    <property type="evidence" value="ECO:0007669"/>
    <property type="project" value="InterPro"/>
</dbReference>
<dbReference type="GO" id="GO:0004535">
    <property type="term" value="F:poly(A)-specific ribonuclease activity"/>
    <property type="evidence" value="ECO:0007669"/>
    <property type="project" value="UniProtKB-UniRule"/>
</dbReference>
<dbReference type="GO" id="GO:0006397">
    <property type="term" value="P:mRNA processing"/>
    <property type="evidence" value="ECO:0007669"/>
    <property type="project" value="UniProtKB-KW"/>
</dbReference>
<dbReference type="GO" id="GO:0000289">
    <property type="term" value="P:nuclear-transcribed mRNA poly(A) tail shortening"/>
    <property type="evidence" value="ECO:0007669"/>
    <property type="project" value="UniProtKB-UniRule"/>
</dbReference>
<dbReference type="CDD" id="cd06143">
    <property type="entry name" value="PAN2_exo"/>
    <property type="match status" value="1"/>
</dbReference>
<dbReference type="FunFam" id="3.30.420.10:FF:000028">
    <property type="entry name" value="PAN2-PAN3 deadenylation complex catalytic subunit PAN2"/>
    <property type="match status" value="1"/>
</dbReference>
<dbReference type="Gene3D" id="3.90.70.10">
    <property type="entry name" value="Cysteine proteinases"/>
    <property type="match status" value="1"/>
</dbReference>
<dbReference type="Gene3D" id="3.30.420.10">
    <property type="entry name" value="Ribonuclease H-like superfamily/Ribonuclease H"/>
    <property type="match status" value="1"/>
</dbReference>
<dbReference type="Gene3D" id="2.130.10.10">
    <property type="entry name" value="YVTN repeat-like/Quinoprotein amine dehydrogenase"/>
    <property type="match status" value="1"/>
</dbReference>
<dbReference type="HAMAP" id="MF_03182">
    <property type="entry name" value="PAN2"/>
    <property type="match status" value="1"/>
</dbReference>
<dbReference type="InterPro" id="IPR013520">
    <property type="entry name" value="Exonuclease_RNaseT/DNA_pol3"/>
</dbReference>
<dbReference type="InterPro" id="IPR030843">
    <property type="entry name" value="PAN2"/>
</dbReference>
<dbReference type="InterPro" id="IPR050785">
    <property type="entry name" value="PAN2-PAN3_catalytic_subunit"/>
</dbReference>
<dbReference type="InterPro" id="IPR048841">
    <property type="entry name" value="PAN2_N"/>
</dbReference>
<dbReference type="InterPro" id="IPR028881">
    <property type="entry name" value="PAN2_UCH_dom"/>
</dbReference>
<dbReference type="InterPro" id="IPR038765">
    <property type="entry name" value="Papain-like_cys_pep_sf"/>
</dbReference>
<dbReference type="InterPro" id="IPR012337">
    <property type="entry name" value="RNaseH-like_sf"/>
</dbReference>
<dbReference type="InterPro" id="IPR036397">
    <property type="entry name" value="RNaseH_sf"/>
</dbReference>
<dbReference type="InterPro" id="IPR028889">
    <property type="entry name" value="USP_dom"/>
</dbReference>
<dbReference type="InterPro" id="IPR015943">
    <property type="entry name" value="WD40/YVTN_repeat-like_dom_sf"/>
</dbReference>
<dbReference type="InterPro" id="IPR036322">
    <property type="entry name" value="WD40_repeat_dom_sf"/>
</dbReference>
<dbReference type="PANTHER" id="PTHR15728">
    <property type="entry name" value="DEADENYLATION COMPLEX CATALYTIC SUBUNIT PAN2"/>
    <property type="match status" value="1"/>
</dbReference>
<dbReference type="PANTHER" id="PTHR15728:SF0">
    <property type="entry name" value="PAN2-PAN3 DEADENYLATION COMPLEX CATALYTIC SUBUNIT PAN2"/>
    <property type="match status" value="1"/>
</dbReference>
<dbReference type="Pfam" id="PF20770">
    <property type="entry name" value="PAN2_N"/>
    <property type="match status" value="1"/>
</dbReference>
<dbReference type="Pfam" id="PF00929">
    <property type="entry name" value="RNase_T"/>
    <property type="match status" value="1"/>
</dbReference>
<dbReference type="Pfam" id="PF13423">
    <property type="entry name" value="UCH_1"/>
    <property type="match status" value="1"/>
</dbReference>
<dbReference type="SMART" id="SM00479">
    <property type="entry name" value="EXOIII"/>
    <property type="match status" value="1"/>
</dbReference>
<dbReference type="SUPFAM" id="SSF54001">
    <property type="entry name" value="Cysteine proteinases"/>
    <property type="match status" value="1"/>
</dbReference>
<dbReference type="SUPFAM" id="SSF53098">
    <property type="entry name" value="Ribonuclease H-like"/>
    <property type="match status" value="1"/>
</dbReference>
<dbReference type="SUPFAM" id="SSF50978">
    <property type="entry name" value="WD40 repeat-like"/>
    <property type="match status" value="1"/>
</dbReference>
<dbReference type="PROSITE" id="PS50235">
    <property type="entry name" value="USP_3"/>
    <property type="match status" value="1"/>
</dbReference>
<gene>
    <name evidence="1" type="primary">PAN2</name>
    <name type="ORF">PICST_88597</name>
</gene>
<reference key="1">
    <citation type="journal article" date="2007" name="Nat. Biotechnol.">
        <title>Genome sequence of the lignocellulose-bioconverting and xylose-fermenting yeast Pichia stipitis.</title>
        <authorList>
            <person name="Jeffries T.W."/>
            <person name="Grigoriev I.V."/>
            <person name="Grimwood J."/>
            <person name="Laplaza J.M."/>
            <person name="Aerts A."/>
            <person name="Salamov A."/>
            <person name="Schmutz J."/>
            <person name="Lindquist E."/>
            <person name="Dehal P."/>
            <person name="Shapiro H."/>
            <person name="Jin Y.-S."/>
            <person name="Passoth V."/>
            <person name="Richardson P.M."/>
        </authorList>
    </citation>
    <scope>NUCLEOTIDE SEQUENCE [LARGE SCALE GENOMIC DNA]</scope>
    <source>
        <strain>ATCC 58785 / CBS 6054 / NBRC 10063 / NRRL Y-11545</strain>
    </source>
</reference>
<organism>
    <name type="scientific">Scheffersomyces stipitis (strain ATCC 58785 / CBS 6054 / NBRC 10063 / NRRL Y-11545)</name>
    <name type="common">Yeast</name>
    <name type="synonym">Pichia stipitis</name>
    <dbReference type="NCBI Taxonomy" id="322104"/>
    <lineage>
        <taxon>Eukaryota</taxon>
        <taxon>Fungi</taxon>
        <taxon>Dikarya</taxon>
        <taxon>Ascomycota</taxon>
        <taxon>Saccharomycotina</taxon>
        <taxon>Pichiomycetes</taxon>
        <taxon>Debaryomycetaceae</taxon>
        <taxon>Scheffersomyces</taxon>
    </lineage>
</organism>